<proteinExistence type="inferred from homology"/>
<gene>
    <name evidence="1" type="primary">lon</name>
    <name type="ordered locus">TP_0524</name>
</gene>
<name>LON_TREPA</name>
<sequence>MAKNTDIEHDAHEPAGHGDVRESAVENPSASAVSDGEERATFAPEVAPQTDTESAQGAAQESEPEVQRAGEAEKGVPEKAKAVVPLDELLPQKVHLIPLTGRPIYPGIFTPLLISDEDDVRSVESAYSDSGFIGLCLVKTDTQNPTISDLYEVGSVARIVKKINLPDGGLNVFISTQKRFRIRKHVHHSKPIVAAVQYLSDLIEGDPLEIKALVRGLIGEMKELSENNPLFSEEMRLNMINIDHPGKIADFIASILNISKEEQQRTLEILDVRKRMEEVFVYIKKEKDLLEIQRKIQNDLNSRVEKNQREYFLREELRSIKEELGLTTDPKERDQRKFRALIDSFHFEGEVKEAVESELEKLSLTDPNSPEYSVGRTYLETVLSLPWHAPEKEEYDLKKAQKLLDEDHYGLENVKERIVEYLAVRKLRADTKGSIILLVGPPGVGKTSVGKSIARAIHKPFFRFSVGGISDEAEIKGHRRTYIGALPGKVLQGLKIVKTKAPVFMIDEVDKIGSGARGDPAGALLEVLDPEQNTTFRDHYLDLPFDLSHIVFVLTANSTDPIPRPLLDRAEIIRLSGYIDTEKVEIAKRHLVPKTLEKNGLKRACVSYRKEVLLHLVHSYARESGVRGLEKSLDKLHRKLATEIVLGKRSFDDKCLMDEALIGTFLGKPVFRDDMLKDANKVGTAVGLAWTGMGGDTLLVEAITIPGKASFKLTGQMGAVMKESASIALSWLRRYSAQQRIASPNWFEKRAIHLHIPEGATPKDGPSAGITMTTTLFSLLTQQKVKPRLAMTGELSLTGQVLPIGGLKEKTIAARRGGIKEIIMPKANVRDLDEIPEHVKKGMVFHLVESMEEVLSLAFPKGKRVRAGTAAQSASPETLTG</sequence>
<accession>O83536</accession>
<organism>
    <name type="scientific">Treponema pallidum (strain Nichols)</name>
    <dbReference type="NCBI Taxonomy" id="243276"/>
    <lineage>
        <taxon>Bacteria</taxon>
        <taxon>Pseudomonadati</taxon>
        <taxon>Spirochaetota</taxon>
        <taxon>Spirochaetia</taxon>
        <taxon>Spirochaetales</taxon>
        <taxon>Treponemataceae</taxon>
        <taxon>Treponema</taxon>
    </lineage>
</organism>
<dbReference type="EC" id="3.4.21.53" evidence="1"/>
<dbReference type="EMBL" id="AE000520">
    <property type="protein sequence ID" value="AAC65510.1"/>
    <property type="molecule type" value="Genomic_DNA"/>
</dbReference>
<dbReference type="PIR" id="B71316">
    <property type="entry name" value="B71316"/>
</dbReference>
<dbReference type="RefSeq" id="WP_010881972.1">
    <property type="nucleotide sequence ID" value="NC_021490.2"/>
</dbReference>
<dbReference type="SMR" id="O83536"/>
<dbReference type="STRING" id="243276.TP_0524"/>
<dbReference type="EnsemblBacteria" id="AAC65510">
    <property type="protein sequence ID" value="AAC65510"/>
    <property type="gene ID" value="TP_0524"/>
</dbReference>
<dbReference type="GeneID" id="93876293"/>
<dbReference type="KEGG" id="tpa:TP_0524"/>
<dbReference type="KEGG" id="tpw:TPANIC_0524"/>
<dbReference type="eggNOG" id="COG0466">
    <property type="taxonomic scope" value="Bacteria"/>
</dbReference>
<dbReference type="HOGENOM" id="CLU_004109_4_3_12"/>
<dbReference type="OrthoDB" id="9803599at2"/>
<dbReference type="Proteomes" id="UP000000811">
    <property type="component" value="Chromosome"/>
</dbReference>
<dbReference type="GO" id="GO:0005737">
    <property type="term" value="C:cytoplasm"/>
    <property type="evidence" value="ECO:0007669"/>
    <property type="project" value="UniProtKB-SubCell"/>
</dbReference>
<dbReference type="GO" id="GO:0005524">
    <property type="term" value="F:ATP binding"/>
    <property type="evidence" value="ECO:0007669"/>
    <property type="project" value="UniProtKB-UniRule"/>
</dbReference>
<dbReference type="GO" id="GO:0016887">
    <property type="term" value="F:ATP hydrolysis activity"/>
    <property type="evidence" value="ECO:0007669"/>
    <property type="project" value="UniProtKB-UniRule"/>
</dbReference>
<dbReference type="GO" id="GO:0004176">
    <property type="term" value="F:ATP-dependent peptidase activity"/>
    <property type="evidence" value="ECO:0007669"/>
    <property type="project" value="UniProtKB-UniRule"/>
</dbReference>
<dbReference type="GO" id="GO:0043565">
    <property type="term" value="F:sequence-specific DNA binding"/>
    <property type="evidence" value="ECO:0007669"/>
    <property type="project" value="UniProtKB-UniRule"/>
</dbReference>
<dbReference type="GO" id="GO:0004252">
    <property type="term" value="F:serine-type endopeptidase activity"/>
    <property type="evidence" value="ECO:0007669"/>
    <property type="project" value="UniProtKB-UniRule"/>
</dbReference>
<dbReference type="GO" id="GO:0034605">
    <property type="term" value="P:cellular response to heat"/>
    <property type="evidence" value="ECO:0007669"/>
    <property type="project" value="UniProtKB-UniRule"/>
</dbReference>
<dbReference type="GO" id="GO:0006515">
    <property type="term" value="P:protein quality control for misfolded or incompletely synthesized proteins"/>
    <property type="evidence" value="ECO:0007669"/>
    <property type="project" value="UniProtKB-UniRule"/>
</dbReference>
<dbReference type="CDD" id="cd19500">
    <property type="entry name" value="RecA-like_Lon"/>
    <property type="match status" value="1"/>
</dbReference>
<dbReference type="FunFam" id="3.40.50.300:FF:000021">
    <property type="entry name" value="Lon protease homolog"/>
    <property type="match status" value="1"/>
</dbReference>
<dbReference type="Gene3D" id="1.10.8.60">
    <property type="match status" value="1"/>
</dbReference>
<dbReference type="Gene3D" id="1.20.5.5270">
    <property type="match status" value="1"/>
</dbReference>
<dbReference type="Gene3D" id="1.20.58.1480">
    <property type="match status" value="1"/>
</dbReference>
<dbReference type="Gene3D" id="3.30.230.10">
    <property type="match status" value="1"/>
</dbReference>
<dbReference type="Gene3D" id="2.30.130.40">
    <property type="entry name" value="LON domain-like"/>
    <property type="match status" value="1"/>
</dbReference>
<dbReference type="Gene3D" id="3.40.50.300">
    <property type="entry name" value="P-loop containing nucleotide triphosphate hydrolases"/>
    <property type="match status" value="1"/>
</dbReference>
<dbReference type="HAMAP" id="MF_01973">
    <property type="entry name" value="lon_bact"/>
    <property type="match status" value="1"/>
</dbReference>
<dbReference type="InterPro" id="IPR003593">
    <property type="entry name" value="AAA+_ATPase"/>
</dbReference>
<dbReference type="InterPro" id="IPR003959">
    <property type="entry name" value="ATPase_AAA_core"/>
</dbReference>
<dbReference type="InterPro" id="IPR027543">
    <property type="entry name" value="Lon_bac"/>
</dbReference>
<dbReference type="InterPro" id="IPR004815">
    <property type="entry name" value="Lon_bac/euk-typ"/>
</dbReference>
<dbReference type="InterPro" id="IPR054594">
    <property type="entry name" value="Lon_lid"/>
</dbReference>
<dbReference type="InterPro" id="IPR008269">
    <property type="entry name" value="Lon_proteolytic"/>
</dbReference>
<dbReference type="InterPro" id="IPR027065">
    <property type="entry name" value="Lon_Prtase"/>
</dbReference>
<dbReference type="InterPro" id="IPR003111">
    <property type="entry name" value="Lon_prtase_N"/>
</dbReference>
<dbReference type="InterPro" id="IPR046336">
    <property type="entry name" value="Lon_prtase_N_sf"/>
</dbReference>
<dbReference type="InterPro" id="IPR027417">
    <property type="entry name" value="P-loop_NTPase"/>
</dbReference>
<dbReference type="InterPro" id="IPR008268">
    <property type="entry name" value="Peptidase_S16_AS"/>
</dbReference>
<dbReference type="InterPro" id="IPR015947">
    <property type="entry name" value="PUA-like_sf"/>
</dbReference>
<dbReference type="InterPro" id="IPR020568">
    <property type="entry name" value="Ribosomal_Su5_D2-typ_SF"/>
</dbReference>
<dbReference type="InterPro" id="IPR014721">
    <property type="entry name" value="Ribsml_uS5_D2-typ_fold_subgr"/>
</dbReference>
<dbReference type="NCBIfam" id="TIGR00763">
    <property type="entry name" value="lon"/>
    <property type="match status" value="1"/>
</dbReference>
<dbReference type="PANTHER" id="PTHR43718">
    <property type="entry name" value="LON PROTEASE"/>
    <property type="match status" value="1"/>
</dbReference>
<dbReference type="PANTHER" id="PTHR43718:SF2">
    <property type="entry name" value="LON PROTEASE HOMOLOG, MITOCHONDRIAL"/>
    <property type="match status" value="1"/>
</dbReference>
<dbReference type="Pfam" id="PF00004">
    <property type="entry name" value="AAA"/>
    <property type="match status" value="1"/>
</dbReference>
<dbReference type="Pfam" id="PF05362">
    <property type="entry name" value="Lon_C"/>
    <property type="match status" value="1"/>
</dbReference>
<dbReference type="Pfam" id="PF22667">
    <property type="entry name" value="Lon_lid"/>
    <property type="match status" value="1"/>
</dbReference>
<dbReference type="Pfam" id="PF02190">
    <property type="entry name" value="LON_substr_bdg"/>
    <property type="match status" value="1"/>
</dbReference>
<dbReference type="PIRSF" id="PIRSF001174">
    <property type="entry name" value="Lon_proteas"/>
    <property type="match status" value="1"/>
</dbReference>
<dbReference type="PRINTS" id="PR00830">
    <property type="entry name" value="ENDOLAPTASE"/>
</dbReference>
<dbReference type="SMART" id="SM00382">
    <property type="entry name" value="AAA"/>
    <property type="match status" value="1"/>
</dbReference>
<dbReference type="SMART" id="SM00464">
    <property type="entry name" value="LON"/>
    <property type="match status" value="1"/>
</dbReference>
<dbReference type="SUPFAM" id="SSF52540">
    <property type="entry name" value="P-loop containing nucleoside triphosphate hydrolases"/>
    <property type="match status" value="1"/>
</dbReference>
<dbReference type="SUPFAM" id="SSF88697">
    <property type="entry name" value="PUA domain-like"/>
    <property type="match status" value="1"/>
</dbReference>
<dbReference type="SUPFAM" id="SSF54211">
    <property type="entry name" value="Ribosomal protein S5 domain 2-like"/>
    <property type="match status" value="1"/>
</dbReference>
<dbReference type="PROSITE" id="PS51787">
    <property type="entry name" value="LON_N"/>
    <property type="match status" value="1"/>
</dbReference>
<dbReference type="PROSITE" id="PS51786">
    <property type="entry name" value="LON_PROTEOLYTIC"/>
    <property type="match status" value="1"/>
</dbReference>
<dbReference type="PROSITE" id="PS01046">
    <property type="entry name" value="LON_SER"/>
    <property type="match status" value="1"/>
</dbReference>
<evidence type="ECO:0000255" key="1">
    <source>
        <dbReference type="HAMAP-Rule" id="MF_01973"/>
    </source>
</evidence>
<evidence type="ECO:0000255" key="2">
    <source>
        <dbReference type="PROSITE-ProRule" id="PRU01122"/>
    </source>
</evidence>
<evidence type="ECO:0000255" key="3">
    <source>
        <dbReference type="PROSITE-ProRule" id="PRU01123"/>
    </source>
</evidence>
<evidence type="ECO:0000256" key="4">
    <source>
        <dbReference type="SAM" id="MobiDB-lite"/>
    </source>
</evidence>
<keyword id="KW-0067">ATP-binding</keyword>
<keyword id="KW-0963">Cytoplasm</keyword>
<keyword id="KW-0378">Hydrolase</keyword>
<keyword id="KW-0547">Nucleotide-binding</keyword>
<keyword id="KW-0645">Protease</keyword>
<keyword id="KW-1185">Reference proteome</keyword>
<keyword id="KW-0720">Serine protease</keyword>
<keyword id="KW-0346">Stress response</keyword>
<feature type="chain" id="PRO_0000076146" description="Lon protease">
    <location>
        <begin position="1"/>
        <end position="881"/>
    </location>
</feature>
<feature type="domain" description="Lon N-terminal" evidence="3">
    <location>
        <begin position="94"/>
        <end position="287"/>
    </location>
</feature>
<feature type="domain" description="Lon proteolytic" evidence="2">
    <location>
        <begin position="679"/>
        <end position="861"/>
    </location>
</feature>
<feature type="region of interest" description="Disordered" evidence="4">
    <location>
        <begin position="1"/>
        <end position="77"/>
    </location>
</feature>
<feature type="compositionally biased region" description="Basic and acidic residues" evidence="4">
    <location>
        <begin position="1"/>
        <end position="24"/>
    </location>
</feature>
<feature type="compositionally biased region" description="Polar residues" evidence="4">
    <location>
        <begin position="49"/>
        <end position="59"/>
    </location>
</feature>
<feature type="compositionally biased region" description="Basic and acidic residues" evidence="4">
    <location>
        <begin position="65"/>
        <end position="77"/>
    </location>
</feature>
<feature type="active site" evidence="1">
    <location>
        <position position="767"/>
    </location>
</feature>
<feature type="active site" evidence="1">
    <location>
        <position position="810"/>
    </location>
</feature>
<feature type="binding site" evidence="1">
    <location>
        <begin position="440"/>
        <end position="447"/>
    </location>
    <ligand>
        <name>ATP</name>
        <dbReference type="ChEBI" id="CHEBI:30616"/>
    </ligand>
</feature>
<comment type="function">
    <text evidence="1">ATP-dependent serine protease that mediates the selective degradation of mutant and abnormal proteins as well as certain short-lived regulatory proteins. Required for cellular homeostasis and for survival from DNA damage and developmental changes induced by stress. Degrades polypeptides processively to yield small peptide fragments that are 5 to 10 amino acids long. Binds to DNA in a double-stranded, site-specific manner.</text>
</comment>
<comment type="catalytic activity">
    <reaction evidence="1">
        <text>Hydrolysis of proteins in presence of ATP.</text>
        <dbReference type="EC" id="3.4.21.53"/>
    </reaction>
</comment>
<comment type="subunit">
    <text evidence="1">Homohexamer. Organized in a ring with a central cavity.</text>
</comment>
<comment type="subcellular location">
    <subcellularLocation>
        <location evidence="1">Cytoplasm</location>
    </subcellularLocation>
</comment>
<comment type="induction">
    <text evidence="1">By heat shock.</text>
</comment>
<comment type="similarity">
    <text evidence="1">Belongs to the peptidase S16 family.</text>
</comment>
<reference key="1">
    <citation type="journal article" date="1998" name="Science">
        <title>Complete genome sequence of Treponema pallidum, the syphilis spirochete.</title>
        <authorList>
            <person name="Fraser C.M."/>
            <person name="Norris S.J."/>
            <person name="Weinstock G.M."/>
            <person name="White O."/>
            <person name="Sutton G.G."/>
            <person name="Dodson R.J."/>
            <person name="Gwinn M.L."/>
            <person name="Hickey E.K."/>
            <person name="Clayton R.A."/>
            <person name="Ketchum K.A."/>
            <person name="Sodergren E."/>
            <person name="Hardham J.M."/>
            <person name="McLeod M.P."/>
            <person name="Salzberg S.L."/>
            <person name="Peterson J.D."/>
            <person name="Khalak H.G."/>
            <person name="Richardson D.L."/>
            <person name="Howell J.K."/>
            <person name="Chidambaram M."/>
            <person name="Utterback T.R."/>
            <person name="McDonald L.A."/>
            <person name="Artiach P."/>
            <person name="Bowman C."/>
            <person name="Cotton M.D."/>
            <person name="Fujii C."/>
            <person name="Garland S.A."/>
            <person name="Hatch B."/>
            <person name="Horst K."/>
            <person name="Roberts K.M."/>
            <person name="Sandusky M."/>
            <person name="Weidman J.F."/>
            <person name="Smith H.O."/>
            <person name="Venter J.C."/>
        </authorList>
    </citation>
    <scope>NUCLEOTIDE SEQUENCE [LARGE SCALE GENOMIC DNA]</scope>
    <source>
        <strain>Nichols</strain>
    </source>
</reference>
<protein>
    <recommendedName>
        <fullName evidence="1">Lon protease</fullName>
        <ecNumber evidence="1">3.4.21.53</ecNumber>
    </recommendedName>
    <alternativeName>
        <fullName evidence="1">ATP-dependent protease La</fullName>
    </alternativeName>
</protein>